<accession>C4LBR1</accession>
<comment type="function">
    <text evidence="1">Catalyzes the reversible conversion of 2-phosphoglycerate (2-PG) into phosphoenolpyruvate (PEP). It is essential for the degradation of carbohydrates via glycolysis.</text>
</comment>
<comment type="catalytic activity">
    <reaction evidence="1">
        <text>(2R)-2-phosphoglycerate = phosphoenolpyruvate + H2O</text>
        <dbReference type="Rhea" id="RHEA:10164"/>
        <dbReference type="ChEBI" id="CHEBI:15377"/>
        <dbReference type="ChEBI" id="CHEBI:58289"/>
        <dbReference type="ChEBI" id="CHEBI:58702"/>
        <dbReference type="EC" id="4.2.1.11"/>
    </reaction>
</comment>
<comment type="cofactor">
    <cofactor evidence="1">
        <name>Mg(2+)</name>
        <dbReference type="ChEBI" id="CHEBI:18420"/>
    </cofactor>
    <text evidence="1">Binds a second Mg(2+) ion via substrate during catalysis.</text>
</comment>
<comment type="pathway">
    <text evidence="1">Carbohydrate degradation; glycolysis; pyruvate from D-glyceraldehyde 3-phosphate: step 4/5.</text>
</comment>
<comment type="subunit">
    <text evidence="1">Component of the RNA degradosome, a multiprotein complex involved in RNA processing and mRNA degradation.</text>
</comment>
<comment type="subcellular location">
    <subcellularLocation>
        <location evidence="1">Cytoplasm</location>
    </subcellularLocation>
    <subcellularLocation>
        <location evidence="1">Secreted</location>
    </subcellularLocation>
    <subcellularLocation>
        <location evidence="1">Cell surface</location>
    </subcellularLocation>
    <text evidence="1">Fractions of enolase are present in both the cytoplasm and on the cell surface.</text>
</comment>
<comment type="similarity">
    <text evidence="1">Belongs to the enolase family.</text>
</comment>
<evidence type="ECO:0000255" key="1">
    <source>
        <dbReference type="HAMAP-Rule" id="MF_00318"/>
    </source>
</evidence>
<dbReference type="EC" id="4.2.1.11" evidence="1"/>
<dbReference type="EMBL" id="CP001616">
    <property type="protein sequence ID" value="ACQ94335.1"/>
    <property type="molecule type" value="Genomic_DNA"/>
</dbReference>
<dbReference type="RefSeq" id="WP_015879784.1">
    <property type="nucleotide sequence ID" value="NC_012691.1"/>
</dbReference>
<dbReference type="SMR" id="C4LBR1"/>
<dbReference type="STRING" id="595494.Tola_2742"/>
<dbReference type="KEGG" id="tau:Tola_2742"/>
<dbReference type="eggNOG" id="COG0148">
    <property type="taxonomic scope" value="Bacteria"/>
</dbReference>
<dbReference type="HOGENOM" id="CLU_031223_2_1_6"/>
<dbReference type="OrthoDB" id="9804716at2"/>
<dbReference type="UniPathway" id="UPA00109">
    <property type="reaction ID" value="UER00187"/>
</dbReference>
<dbReference type="Proteomes" id="UP000009073">
    <property type="component" value="Chromosome"/>
</dbReference>
<dbReference type="GO" id="GO:0009986">
    <property type="term" value="C:cell surface"/>
    <property type="evidence" value="ECO:0007669"/>
    <property type="project" value="UniProtKB-SubCell"/>
</dbReference>
<dbReference type="GO" id="GO:0005576">
    <property type="term" value="C:extracellular region"/>
    <property type="evidence" value="ECO:0007669"/>
    <property type="project" value="UniProtKB-SubCell"/>
</dbReference>
<dbReference type="GO" id="GO:0000015">
    <property type="term" value="C:phosphopyruvate hydratase complex"/>
    <property type="evidence" value="ECO:0007669"/>
    <property type="project" value="InterPro"/>
</dbReference>
<dbReference type="GO" id="GO:0000287">
    <property type="term" value="F:magnesium ion binding"/>
    <property type="evidence" value="ECO:0007669"/>
    <property type="project" value="UniProtKB-UniRule"/>
</dbReference>
<dbReference type="GO" id="GO:0004634">
    <property type="term" value="F:phosphopyruvate hydratase activity"/>
    <property type="evidence" value="ECO:0007669"/>
    <property type="project" value="UniProtKB-UniRule"/>
</dbReference>
<dbReference type="GO" id="GO:0006096">
    <property type="term" value="P:glycolytic process"/>
    <property type="evidence" value="ECO:0007669"/>
    <property type="project" value="UniProtKB-UniRule"/>
</dbReference>
<dbReference type="CDD" id="cd03313">
    <property type="entry name" value="enolase"/>
    <property type="match status" value="1"/>
</dbReference>
<dbReference type="FunFam" id="3.20.20.120:FF:000001">
    <property type="entry name" value="Enolase"/>
    <property type="match status" value="1"/>
</dbReference>
<dbReference type="FunFam" id="3.30.390.10:FF:000001">
    <property type="entry name" value="Enolase"/>
    <property type="match status" value="1"/>
</dbReference>
<dbReference type="Gene3D" id="3.20.20.120">
    <property type="entry name" value="Enolase-like C-terminal domain"/>
    <property type="match status" value="1"/>
</dbReference>
<dbReference type="Gene3D" id="3.30.390.10">
    <property type="entry name" value="Enolase-like, N-terminal domain"/>
    <property type="match status" value="1"/>
</dbReference>
<dbReference type="HAMAP" id="MF_00318">
    <property type="entry name" value="Enolase"/>
    <property type="match status" value="1"/>
</dbReference>
<dbReference type="InterPro" id="IPR000941">
    <property type="entry name" value="Enolase"/>
</dbReference>
<dbReference type="InterPro" id="IPR036849">
    <property type="entry name" value="Enolase-like_C_sf"/>
</dbReference>
<dbReference type="InterPro" id="IPR029017">
    <property type="entry name" value="Enolase-like_N"/>
</dbReference>
<dbReference type="InterPro" id="IPR020810">
    <property type="entry name" value="Enolase_C"/>
</dbReference>
<dbReference type="InterPro" id="IPR020809">
    <property type="entry name" value="Enolase_CS"/>
</dbReference>
<dbReference type="InterPro" id="IPR020811">
    <property type="entry name" value="Enolase_N"/>
</dbReference>
<dbReference type="NCBIfam" id="TIGR01060">
    <property type="entry name" value="eno"/>
    <property type="match status" value="1"/>
</dbReference>
<dbReference type="PANTHER" id="PTHR11902">
    <property type="entry name" value="ENOLASE"/>
    <property type="match status" value="1"/>
</dbReference>
<dbReference type="PANTHER" id="PTHR11902:SF1">
    <property type="entry name" value="ENOLASE"/>
    <property type="match status" value="1"/>
</dbReference>
<dbReference type="Pfam" id="PF00113">
    <property type="entry name" value="Enolase_C"/>
    <property type="match status" value="1"/>
</dbReference>
<dbReference type="Pfam" id="PF03952">
    <property type="entry name" value="Enolase_N"/>
    <property type="match status" value="1"/>
</dbReference>
<dbReference type="PIRSF" id="PIRSF001400">
    <property type="entry name" value="Enolase"/>
    <property type="match status" value="1"/>
</dbReference>
<dbReference type="PRINTS" id="PR00148">
    <property type="entry name" value="ENOLASE"/>
</dbReference>
<dbReference type="SFLD" id="SFLDS00001">
    <property type="entry name" value="Enolase"/>
    <property type="match status" value="1"/>
</dbReference>
<dbReference type="SFLD" id="SFLDF00002">
    <property type="entry name" value="enolase"/>
    <property type="match status" value="1"/>
</dbReference>
<dbReference type="SMART" id="SM01192">
    <property type="entry name" value="Enolase_C"/>
    <property type="match status" value="1"/>
</dbReference>
<dbReference type="SMART" id="SM01193">
    <property type="entry name" value="Enolase_N"/>
    <property type="match status" value="1"/>
</dbReference>
<dbReference type="SUPFAM" id="SSF51604">
    <property type="entry name" value="Enolase C-terminal domain-like"/>
    <property type="match status" value="1"/>
</dbReference>
<dbReference type="SUPFAM" id="SSF54826">
    <property type="entry name" value="Enolase N-terminal domain-like"/>
    <property type="match status" value="1"/>
</dbReference>
<dbReference type="PROSITE" id="PS00164">
    <property type="entry name" value="ENOLASE"/>
    <property type="match status" value="1"/>
</dbReference>
<feature type="chain" id="PRO_1000205111" description="Enolase">
    <location>
        <begin position="1"/>
        <end position="433"/>
    </location>
</feature>
<feature type="active site" description="Proton donor" evidence="1">
    <location>
        <position position="209"/>
    </location>
</feature>
<feature type="active site" description="Proton acceptor" evidence="1">
    <location>
        <position position="343"/>
    </location>
</feature>
<feature type="binding site" evidence="1">
    <location>
        <position position="167"/>
    </location>
    <ligand>
        <name>(2R)-2-phosphoglycerate</name>
        <dbReference type="ChEBI" id="CHEBI:58289"/>
    </ligand>
</feature>
<feature type="binding site" evidence="1">
    <location>
        <position position="246"/>
    </location>
    <ligand>
        <name>Mg(2+)</name>
        <dbReference type="ChEBI" id="CHEBI:18420"/>
    </ligand>
</feature>
<feature type="binding site" evidence="1">
    <location>
        <position position="291"/>
    </location>
    <ligand>
        <name>Mg(2+)</name>
        <dbReference type="ChEBI" id="CHEBI:18420"/>
    </ligand>
</feature>
<feature type="binding site" evidence="1">
    <location>
        <position position="318"/>
    </location>
    <ligand>
        <name>Mg(2+)</name>
        <dbReference type="ChEBI" id="CHEBI:18420"/>
    </ligand>
</feature>
<feature type="binding site" evidence="1">
    <location>
        <position position="343"/>
    </location>
    <ligand>
        <name>(2R)-2-phosphoglycerate</name>
        <dbReference type="ChEBI" id="CHEBI:58289"/>
    </ligand>
</feature>
<feature type="binding site" evidence="1">
    <location>
        <position position="372"/>
    </location>
    <ligand>
        <name>(2R)-2-phosphoglycerate</name>
        <dbReference type="ChEBI" id="CHEBI:58289"/>
    </ligand>
</feature>
<feature type="binding site" evidence="1">
    <location>
        <position position="373"/>
    </location>
    <ligand>
        <name>(2R)-2-phosphoglycerate</name>
        <dbReference type="ChEBI" id="CHEBI:58289"/>
    </ligand>
</feature>
<feature type="binding site" evidence="1">
    <location>
        <position position="394"/>
    </location>
    <ligand>
        <name>(2R)-2-phosphoglycerate</name>
        <dbReference type="ChEBI" id="CHEBI:58289"/>
    </ligand>
</feature>
<protein>
    <recommendedName>
        <fullName evidence="1">Enolase</fullName>
        <ecNumber evidence="1">4.2.1.11</ecNumber>
    </recommendedName>
    <alternativeName>
        <fullName evidence="1">2-phospho-D-glycerate hydro-lyase</fullName>
    </alternativeName>
    <alternativeName>
        <fullName evidence="1">2-phosphoglycerate dehydratase</fullName>
    </alternativeName>
</protein>
<proteinExistence type="inferred from homology"/>
<keyword id="KW-0963">Cytoplasm</keyword>
<keyword id="KW-0324">Glycolysis</keyword>
<keyword id="KW-0456">Lyase</keyword>
<keyword id="KW-0460">Magnesium</keyword>
<keyword id="KW-0479">Metal-binding</keyword>
<keyword id="KW-1185">Reference proteome</keyword>
<keyword id="KW-0964">Secreted</keyword>
<reference key="1">
    <citation type="submission" date="2009-05" db="EMBL/GenBank/DDBJ databases">
        <title>Complete sequence of Tolumonas auensis DSM 9187.</title>
        <authorList>
            <consortium name="US DOE Joint Genome Institute"/>
            <person name="Lucas S."/>
            <person name="Copeland A."/>
            <person name="Lapidus A."/>
            <person name="Glavina del Rio T."/>
            <person name="Tice H."/>
            <person name="Bruce D."/>
            <person name="Goodwin L."/>
            <person name="Pitluck S."/>
            <person name="Chertkov O."/>
            <person name="Brettin T."/>
            <person name="Detter J.C."/>
            <person name="Han C."/>
            <person name="Larimer F."/>
            <person name="Land M."/>
            <person name="Hauser L."/>
            <person name="Kyrpides N."/>
            <person name="Mikhailova N."/>
            <person name="Spring S."/>
            <person name="Beller H."/>
        </authorList>
    </citation>
    <scope>NUCLEOTIDE SEQUENCE [LARGE SCALE GENOMIC DNA]</scope>
    <source>
        <strain>DSM 9187 / NBRC 110442 / TA 4</strain>
    </source>
</reference>
<organism>
    <name type="scientific">Tolumonas auensis (strain DSM 9187 / NBRC 110442 / TA 4)</name>
    <dbReference type="NCBI Taxonomy" id="595494"/>
    <lineage>
        <taxon>Bacteria</taxon>
        <taxon>Pseudomonadati</taxon>
        <taxon>Pseudomonadota</taxon>
        <taxon>Gammaproteobacteria</taxon>
        <taxon>Aeromonadales</taxon>
        <taxon>Aeromonadaceae</taxon>
        <taxon>Tolumonas</taxon>
    </lineage>
</organism>
<gene>
    <name evidence="1" type="primary">eno</name>
    <name type="ordered locus">Tola_2742</name>
</gene>
<sequence length="433" mass="45554">MSKIVKVIAREIIDSRGNPTVEAEVHLEGGFVGMAAAPSGASTGSREALELRDGDKARFLGKGVLKAVGAVNGPIAAALLGKDAQDQAAIDQIMIDLDGTENKSNFGANAILAVSLANAKAAAAAKGLPLYAHIAELNGTPGVYSMPLPMMNIINGGEHADNNVDIQEFMIQPVGAKTLKEAVRMGAEVFHNLAKVLKSKGYNTAVGDEGGFAPNLKSNAEALEVIAEAVAAAGYVLGKDVTLAMDCAASEFYDAEKKEYNLKGEGRIFTSNGFSDFLEDLTTKFPIVSIEDGLDESDWEGFAYQTQKLGKKIQIVGDDLFVTNTKILKRGIDNGIANSILIKFNQIGSLTETLAAIKMAKDAGYTAVISHRSGETEDATIADLAVGTAAGQIKTGSMSRSDRVAKYNQLIRIEEALGAKAPFNGLKEVKGQA</sequence>
<name>ENO_TOLAT</name>